<accession>Q95LV7</accession>
<accession>G7P1S8</accession>
<feature type="chain" id="PRO_0000312221" description="SUN domain-containing protein 3">
    <location>
        <begin position="1"/>
        <end position="361"/>
    </location>
</feature>
<feature type="topological domain" description="Nuclear" evidence="6">
    <location>
        <begin position="1"/>
        <end position="47"/>
    </location>
</feature>
<feature type="transmembrane region" description="Helical" evidence="3">
    <location>
        <begin position="48"/>
        <end position="69"/>
    </location>
</feature>
<feature type="topological domain" description="Perinuclear space" evidence="6">
    <location>
        <begin position="70"/>
        <end position="361"/>
    </location>
</feature>
<feature type="domain" description="SUN" evidence="4">
    <location>
        <begin position="197"/>
        <end position="358"/>
    </location>
</feature>
<feature type="region of interest" description="Disordered" evidence="5">
    <location>
        <begin position="19"/>
        <end position="38"/>
    </location>
</feature>
<feature type="coiled-coil region" evidence="3">
    <location>
        <begin position="103"/>
        <end position="129"/>
    </location>
</feature>
<feature type="compositionally biased region" description="Low complexity" evidence="5">
    <location>
        <begin position="22"/>
        <end position="31"/>
    </location>
</feature>
<feature type="splice variant" id="VSP_058700" description="In isoform 2.">
    <location>
        <begin position="164"/>
        <end position="167"/>
    </location>
</feature>
<proteinExistence type="evidence at transcript level"/>
<gene>
    <name type="primary">SUN3</name>
    <name type="synonym">SUNC1</name>
    <name type="ORF">QtsA-17495</name>
</gene>
<keyword id="KW-0025">Alternative splicing</keyword>
<keyword id="KW-0175">Coiled coil</keyword>
<keyword id="KW-0472">Membrane</keyword>
<keyword id="KW-0539">Nucleus</keyword>
<keyword id="KW-1185">Reference proteome</keyword>
<keyword id="KW-0812">Transmembrane</keyword>
<keyword id="KW-1133">Transmembrane helix</keyword>
<sequence length="361" mass="40839">MSGKAKARRAAMFFRGCSEDASGSTSGSTLLSEDENPDTNGVTRSWKIILSTMFTLTFLLVGLLSHQWLKETEVPQKSRQLYAIIAEYGSRLYKYQARLRMPKEQLELLKKESQTLENNFHKILLLIEQIDVLKALLRDMKDGTDNNHSWNTHGDPVEDPDHTEVLDEEMSNLVNYVLKKLREDQVQMADYALKSAGASIIEAGTSESYKNNKAKLYWHGISFLNHEMPPDIILQPDVYPGNCWAFPGSQGHTLIKLATKIIPTAVTMEHISEKVSPSGNISSAPKEFSVYGITKKCEGEEIFLGQFIYNKTGTTVQTFELQHAVSEYLLCVKLNIFSNWGHPKYTCLYRFRVHGTPGKHI</sequence>
<organism>
    <name type="scientific">Macaca fascicularis</name>
    <name type="common">Crab-eating macaque</name>
    <name type="synonym">Cynomolgus monkey</name>
    <dbReference type="NCBI Taxonomy" id="9541"/>
    <lineage>
        <taxon>Eukaryota</taxon>
        <taxon>Metazoa</taxon>
        <taxon>Chordata</taxon>
        <taxon>Craniata</taxon>
        <taxon>Vertebrata</taxon>
        <taxon>Euteleostomi</taxon>
        <taxon>Mammalia</taxon>
        <taxon>Eutheria</taxon>
        <taxon>Euarchontoglires</taxon>
        <taxon>Primates</taxon>
        <taxon>Haplorrhini</taxon>
        <taxon>Catarrhini</taxon>
        <taxon>Cercopithecidae</taxon>
        <taxon>Cercopithecinae</taxon>
        <taxon>Macaca</taxon>
    </lineage>
</organism>
<dbReference type="EMBL" id="CM001278">
    <property type="protein sequence ID" value="EHH52136.1"/>
    <property type="molecule type" value="Genomic_DNA"/>
</dbReference>
<dbReference type="EMBL" id="AB071084">
    <property type="protein sequence ID" value="BAB64478.1"/>
    <property type="status" value="ALT_INIT"/>
    <property type="molecule type" value="mRNA"/>
</dbReference>
<dbReference type="RefSeq" id="XP_005549683.1">
    <property type="nucleotide sequence ID" value="XM_005549626.2"/>
</dbReference>
<dbReference type="SMR" id="Q95LV7"/>
<dbReference type="STRING" id="9541.ENSMFAP00000016438"/>
<dbReference type="Ensembl" id="ENSMFAT00000066970.2">
    <molecule id="Q95LV7-1"/>
    <property type="protein sequence ID" value="ENSMFAP00000016438.2"/>
    <property type="gene ID" value="ENSMFAG00000031387.2"/>
</dbReference>
<dbReference type="GeneID" id="102136181"/>
<dbReference type="KEGG" id="mcf:102136181"/>
<dbReference type="CTD" id="256979"/>
<dbReference type="VEuPathDB" id="HostDB:ENSMFAG00000031387"/>
<dbReference type="eggNOG" id="KOG2687">
    <property type="taxonomic scope" value="Eukaryota"/>
</dbReference>
<dbReference type="GeneTree" id="ENSGT00940000161393"/>
<dbReference type="OMA" id="QGHILIR"/>
<dbReference type="Proteomes" id="UP000009130">
    <property type="component" value="Chromosome 3"/>
</dbReference>
<dbReference type="Proteomes" id="UP000233100">
    <property type="component" value="Chromosome 3"/>
</dbReference>
<dbReference type="Bgee" id="ENSMFAG00000031387">
    <property type="expression patterns" value="Expressed in multicellular organism"/>
</dbReference>
<dbReference type="GO" id="GO:0034993">
    <property type="term" value="C:meiotic nuclear membrane microtubule tethering complex"/>
    <property type="evidence" value="ECO:0007669"/>
    <property type="project" value="Ensembl"/>
</dbReference>
<dbReference type="GO" id="GO:0005637">
    <property type="term" value="C:nuclear inner membrane"/>
    <property type="evidence" value="ECO:0007669"/>
    <property type="project" value="UniProtKB-SubCell"/>
</dbReference>
<dbReference type="GO" id="GO:0043495">
    <property type="term" value="F:protein-membrane adaptor activity"/>
    <property type="evidence" value="ECO:0007669"/>
    <property type="project" value="TreeGrafter"/>
</dbReference>
<dbReference type="FunFam" id="2.60.120.260:FF:000074">
    <property type="entry name" value="Sad1 and UNC84 domain-containing 3"/>
    <property type="match status" value="1"/>
</dbReference>
<dbReference type="Gene3D" id="2.60.120.260">
    <property type="entry name" value="Galactose-binding domain-like"/>
    <property type="match status" value="1"/>
</dbReference>
<dbReference type="InterPro" id="IPR045119">
    <property type="entry name" value="SUN1-5"/>
</dbReference>
<dbReference type="InterPro" id="IPR012919">
    <property type="entry name" value="SUN_dom"/>
</dbReference>
<dbReference type="PANTHER" id="PTHR12911">
    <property type="entry name" value="SAD1/UNC-84-LIKE PROTEIN-RELATED"/>
    <property type="match status" value="1"/>
</dbReference>
<dbReference type="PANTHER" id="PTHR12911:SF24">
    <property type="entry name" value="SUN DOMAIN-CONTAINING PROTEIN 3"/>
    <property type="match status" value="1"/>
</dbReference>
<dbReference type="Pfam" id="PF07738">
    <property type="entry name" value="Sad1_UNC"/>
    <property type="match status" value="1"/>
</dbReference>
<dbReference type="PROSITE" id="PS51469">
    <property type="entry name" value="SUN"/>
    <property type="match status" value="1"/>
</dbReference>
<comment type="function">
    <text evidence="1">As a probable component of the LINC (LInker of Nucleoskeleton and Cytoskeleton) complex, involved in the connection between the nuclear lamina and the cytoskeleton. The nucleocytoplasmic interactions established by the LINC complex play an important role in the transmission of mechanical forces across the nuclear envelope and in nuclear movement and positioning. May be involved in nuclear remodeling during sperm head formation in spermatogenesis. A probable SUN3:SYNE1 LINC complex may tether spermatid nuclei to posterior cytoskeletal structures such as the manchette.</text>
</comment>
<comment type="subunit">
    <text evidence="1">Self-associates. Interacts with SYNE1 and SPAG4/SUN4. Proposed to form a spermatogenesis-specific LINC complex with SYNE1 during sperm head formation possibly implicating a SUN domain-based heterotrimer with SPAG4/SUN4 associating with SYNE1.</text>
</comment>
<comment type="subcellular location">
    <subcellularLocation>
        <location evidence="6">Membrane</location>
        <topology evidence="6">Single-pass membrane protein</topology>
    </subcellularLocation>
    <subcellularLocation>
        <location evidence="1">Nucleus envelope</location>
    </subcellularLocation>
    <subcellularLocation>
        <location evidence="6">Nucleus inner membrane</location>
    </subcellularLocation>
</comment>
<comment type="alternative products">
    <event type="alternative splicing"/>
    <isoform>
        <id>Q95LV7-1</id>
        <name>1</name>
        <sequence type="displayed"/>
    </isoform>
    <isoform>
        <id>Q95LV7-2</id>
        <name>2</name>
        <sequence type="described" ref="VSP_058700"/>
    </isoform>
</comment>
<comment type="domain">
    <text evidence="2">The short coiled coil domain is proposed to be not involved in load-bearing and force transmission from the cytoskeleton but in mere nucleus anchorage instead.</text>
</comment>
<comment type="sequence caution" evidence="6">
    <conflict type="erroneous initiation">
        <sequence resource="EMBL-CDS" id="BAB64478"/>
    </conflict>
    <text>Truncated N-terminus.</text>
</comment>
<name>SUN3_MACFA</name>
<protein>
    <recommendedName>
        <fullName>SUN domain-containing protein 3</fullName>
    </recommendedName>
    <alternativeName>
        <fullName>Sad1/unc-84 domain-containing protein 1</fullName>
    </alternativeName>
</protein>
<evidence type="ECO:0000250" key="1">
    <source>
        <dbReference type="UniProtKB" id="Q5SS91"/>
    </source>
</evidence>
<evidence type="ECO:0000250" key="2">
    <source>
        <dbReference type="UniProtKB" id="Q8TAQ9"/>
    </source>
</evidence>
<evidence type="ECO:0000255" key="3"/>
<evidence type="ECO:0000255" key="4">
    <source>
        <dbReference type="PROSITE-ProRule" id="PRU00802"/>
    </source>
</evidence>
<evidence type="ECO:0000256" key="5">
    <source>
        <dbReference type="SAM" id="MobiDB-lite"/>
    </source>
</evidence>
<evidence type="ECO:0000305" key="6"/>
<reference key="1">
    <citation type="journal article" date="2011" name="Nat. Biotechnol.">
        <title>Genome sequencing and comparison of two nonhuman primate animal models, the cynomolgus and Chinese rhesus macaques.</title>
        <authorList>
            <person name="Yan G."/>
            <person name="Zhang G."/>
            <person name="Fang X."/>
            <person name="Zhang Y."/>
            <person name="Li C."/>
            <person name="Ling F."/>
            <person name="Cooper D.N."/>
            <person name="Li Q."/>
            <person name="Li Y."/>
            <person name="van Gool A.J."/>
            <person name="Du H."/>
            <person name="Chen J."/>
            <person name="Chen R."/>
            <person name="Zhang P."/>
            <person name="Huang Z."/>
            <person name="Thompson J.R."/>
            <person name="Meng Y."/>
            <person name="Bai Y."/>
            <person name="Wang J."/>
            <person name="Zhuo M."/>
            <person name="Wang T."/>
            <person name="Huang Y."/>
            <person name="Wei L."/>
            <person name="Li J."/>
            <person name="Wang Z."/>
            <person name="Hu H."/>
            <person name="Yang P."/>
            <person name="Le L."/>
            <person name="Stenson P.D."/>
            <person name="Li B."/>
            <person name="Liu X."/>
            <person name="Ball E.V."/>
            <person name="An N."/>
            <person name="Huang Q."/>
            <person name="Zhang Y."/>
            <person name="Fan W."/>
            <person name="Zhang X."/>
            <person name="Li Y."/>
            <person name="Wang W."/>
            <person name="Katze M.G."/>
            <person name="Su B."/>
            <person name="Nielsen R."/>
            <person name="Yang H."/>
            <person name="Wang J."/>
            <person name="Wang X."/>
            <person name="Wang J."/>
        </authorList>
    </citation>
    <scope>NUCLEOTIDE SEQUENCE [LARGE SCALE GENOMIC DNA]</scope>
</reference>
<reference key="2">
    <citation type="journal article" date="2002" name="BMC Genomics">
        <title>Cynomolgus monkey testicular cDNAs for discovery of novel human genes in the human genome sequence.</title>
        <authorList>
            <person name="Osada N."/>
            <person name="Hida M."/>
            <person name="Kusuda J."/>
            <person name="Tanuma R."/>
            <person name="Hirata M."/>
            <person name="Suto Y."/>
            <person name="Hirai M."/>
            <person name="Terao K."/>
            <person name="Sugano S."/>
            <person name="Hashimoto K."/>
        </authorList>
    </citation>
    <scope>NUCLEOTIDE SEQUENCE [LARGE SCALE MRNA] OF 85-361 (ISOFORM 1)</scope>
    <source>
        <tissue>Testis</tissue>
    </source>
</reference>